<protein>
    <recommendedName>
        <fullName evidence="1">Small ribosomal subunit protein uS7</fullName>
    </recommendedName>
    <alternativeName>
        <fullName evidence="2">30S ribosomal protein S7</fullName>
    </alternativeName>
</protein>
<sequence>MPRRRIVGQRKILPDPKFSSELLAKFINILMVSGKKSLSESIVYTALEILVQRSSKSHLDAFEAALNNVRPTVEVKSRRVGGSTYQVPIEVRPVRRNALAMRWIVEAARKRGDKSMALRLANELADAMEKKGSAVKKCEDVHRTAEANKAFAHYRW</sequence>
<accession>C4K4G0</accession>
<name>RS7_HAMD5</name>
<organism>
    <name type="scientific">Hamiltonella defensa subsp. Acyrthosiphon pisum (strain 5AT)</name>
    <dbReference type="NCBI Taxonomy" id="572265"/>
    <lineage>
        <taxon>Bacteria</taxon>
        <taxon>Pseudomonadati</taxon>
        <taxon>Pseudomonadota</taxon>
        <taxon>Gammaproteobacteria</taxon>
        <taxon>Enterobacterales</taxon>
        <taxon>Enterobacteriaceae</taxon>
        <taxon>aphid secondary symbionts</taxon>
        <taxon>Candidatus Hamiltonella</taxon>
    </lineage>
</organism>
<keyword id="KW-0687">Ribonucleoprotein</keyword>
<keyword id="KW-0689">Ribosomal protein</keyword>
<keyword id="KW-0694">RNA-binding</keyword>
<keyword id="KW-0699">rRNA-binding</keyword>
<keyword id="KW-0820">tRNA-binding</keyword>
<comment type="function">
    <text evidence="1">One of the primary rRNA binding proteins, it binds directly to 16S rRNA where it nucleates assembly of the head domain of the 30S subunit. Is located at the subunit interface close to the decoding center, probably blocks exit of the E-site tRNA.</text>
</comment>
<comment type="subunit">
    <text evidence="1">Part of the 30S ribosomal subunit. Contacts proteins S9 and S11.</text>
</comment>
<comment type="similarity">
    <text evidence="1">Belongs to the universal ribosomal protein uS7 family.</text>
</comment>
<feature type="chain" id="PRO_1000206407" description="Small ribosomal subunit protein uS7">
    <location>
        <begin position="1"/>
        <end position="156"/>
    </location>
</feature>
<proteinExistence type="inferred from homology"/>
<dbReference type="EMBL" id="CP001277">
    <property type="protein sequence ID" value="ACQ67453.1"/>
    <property type="molecule type" value="Genomic_DNA"/>
</dbReference>
<dbReference type="RefSeq" id="WP_015873274.1">
    <property type="nucleotide sequence ID" value="NC_012751.1"/>
</dbReference>
<dbReference type="SMR" id="C4K4G0"/>
<dbReference type="STRING" id="572265.HDEF_0720"/>
<dbReference type="GeneID" id="66260573"/>
<dbReference type="KEGG" id="hde:HDEF_0720"/>
<dbReference type="eggNOG" id="COG0049">
    <property type="taxonomic scope" value="Bacteria"/>
</dbReference>
<dbReference type="HOGENOM" id="CLU_072226_1_1_6"/>
<dbReference type="Proteomes" id="UP000002334">
    <property type="component" value="Chromosome"/>
</dbReference>
<dbReference type="GO" id="GO:0015935">
    <property type="term" value="C:small ribosomal subunit"/>
    <property type="evidence" value="ECO:0007669"/>
    <property type="project" value="InterPro"/>
</dbReference>
<dbReference type="GO" id="GO:0019843">
    <property type="term" value="F:rRNA binding"/>
    <property type="evidence" value="ECO:0007669"/>
    <property type="project" value="UniProtKB-UniRule"/>
</dbReference>
<dbReference type="GO" id="GO:0003735">
    <property type="term" value="F:structural constituent of ribosome"/>
    <property type="evidence" value="ECO:0007669"/>
    <property type="project" value="InterPro"/>
</dbReference>
<dbReference type="GO" id="GO:0000049">
    <property type="term" value="F:tRNA binding"/>
    <property type="evidence" value="ECO:0007669"/>
    <property type="project" value="UniProtKB-UniRule"/>
</dbReference>
<dbReference type="GO" id="GO:0006412">
    <property type="term" value="P:translation"/>
    <property type="evidence" value="ECO:0007669"/>
    <property type="project" value="UniProtKB-UniRule"/>
</dbReference>
<dbReference type="CDD" id="cd14869">
    <property type="entry name" value="uS7_Bacteria"/>
    <property type="match status" value="1"/>
</dbReference>
<dbReference type="FunFam" id="1.10.455.10:FF:000001">
    <property type="entry name" value="30S ribosomal protein S7"/>
    <property type="match status" value="1"/>
</dbReference>
<dbReference type="Gene3D" id="1.10.455.10">
    <property type="entry name" value="Ribosomal protein S7 domain"/>
    <property type="match status" value="1"/>
</dbReference>
<dbReference type="HAMAP" id="MF_00480_B">
    <property type="entry name" value="Ribosomal_uS7_B"/>
    <property type="match status" value="1"/>
</dbReference>
<dbReference type="InterPro" id="IPR000235">
    <property type="entry name" value="Ribosomal_uS7"/>
</dbReference>
<dbReference type="InterPro" id="IPR005717">
    <property type="entry name" value="Ribosomal_uS7_bac/org-type"/>
</dbReference>
<dbReference type="InterPro" id="IPR020606">
    <property type="entry name" value="Ribosomal_uS7_CS"/>
</dbReference>
<dbReference type="InterPro" id="IPR023798">
    <property type="entry name" value="Ribosomal_uS7_dom"/>
</dbReference>
<dbReference type="InterPro" id="IPR036823">
    <property type="entry name" value="Ribosomal_uS7_dom_sf"/>
</dbReference>
<dbReference type="NCBIfam" id="TIGR01029">
    <property type="entry name" value="rpsG_bact"/>
    <property type="match status" value="1"/>
</dbReference>
<dbReference type="PANTHER" id="PTHR11205">
    <property type="entry name" value="RIBOSOMAL PROTEIN S7"/>
    <property type="match status" value="1"/>
</dbReference>
<dbReference type="Pfam" id="PF00177">
    <property type="entry name" value="Ribosomal_S7"/>
    <property type="match status" value="1"/>
</dbReference>
<dbReference type="PIRSF" id="PIRSF002122">
    <property type="entry name" value="RPS7p_RPS7a_RPS5e_RPS7o"/>
    <property type="match status" value="1"/>
</dbReference>
<dbReference type="SUPFAM" id="SSF47973">
    <property type="entry name" value="Ribosomal protein S7"/>
    <property type="match status" value="1"/>
</dbReference>
<dbReference type="PROSITE" id="PS00052">
    <property type="entry name" value="RIBOSOMAL_S7"/>
    <property type="match status" value="1"/>
</dbReference>
<evidence type="ECO:0000255" key="1">
    <source>
        <dbReference type="HAMAP-Rule" id="MF_00480"/>
    </source>
</evidence>
<evidence type="ECO:0000305" key="2"/>
<gene>
    <name evidence="1" type="primary">rpsG</name>
    <name type="ordered locus">HDEF_0720</name>
</gene>
<reference key="1">
    <citation type="journal article" date="2009" name="Proc. Natl. Acad. Sci. U.S.A.">
        <title>Hamiltonella defensa, genome evolution of protective bacterial endosymbiont from pathogenic ancestors.</title>
        <authorList>
            <person name="Degnan P.H."/>
            <person name="Yu Y."/>
            <person name="Sisneros N."/>
            <person name="Wing R.A."/>
            <person name="Moran N.A."/>
        </authorList>
    </citation>
    <scope>NUCLEOTIDE SEQUENCE [LARGE SCALE GENOMIC DNA]</scope>
    <source>
        <strain>5AT</strain>
    </source>
</reference>